<accession>Q892S8</accession>
<dbReference type="EMBL" id="AE015927">
    <property type="protein sequence ID" value="AAO36516.1"/>
    <property type="molecule type" value="Genomic_DNA"/>
</dbReference>
<dbReference type="SMR" id="Q892S8"/>
<dbReference type="STRING" id="212717.CTC_02012"/>
<dbReference type="KEGG" id="ctc:CTC_02012"/>
<dbReference type="HOGENOM" id="CLU_028163_1_1_9"/>
<dbReference type="Proteomes" id="UP000001412">
    <property type="component" value="Chromosome"/>
</dbReference>
<dbReference type="GO" id="GO:0016793">
    <property type="term" value="F:triphosphoric monoester hydrolase activity"/>
    <property type="evidence" value="ECO:0007669"/>
    <property type="project" value="InterPro"/>
</dbReference>
<dbReference type="CDD" id="cd00077">
    <property type="entry name" value="HDc"/>
    <property type="match status" value="1"/>
</dbReference>
<dbReference type="Gene3D" id="1.10.3210.10">
    <property type="entry name" value="Hypothetical protein af1432"/>
    <property type="match status" value="1"/>
</dbReference>
<dbReference type="HAMAP" id="MF_01212">
    <property type="entry name" value="dGTPase_type2"/>
    <property type="match status" value="1"/>
</dbReference>
<dbReference type="InterPro" id="IPR006261">
    <property type="entry name" value="dGTPase"/>
</dbReference>
<dbReference type="InterPro" id="IPR051094">
    <property type="entry name" value="Diverse_Catalytic_Enzymes"/>
</dbReference>
<dbReference type="InterPro" id="IPR023023">
    <property type="entry name" value="dNTPase_2"/>
</dbReference>
<dbReference type="InterPro" id="IPR003607">
    <property type="entry name" value="HD/PDEase_dom"/>
</dbReference>
<dbReference type="InterPro" id="IPR006674">
    <property type="entry name" value="HD_domain"/>
</dbReference>
<dbReference type="InterPro" id="IPR026875">
    <property type="entry name" value="PHydrolase_assoc_dom"/>
</dbReference>
<dbReference type="NCBIfam" id="TIGR01353">
    <property type="entry name" value="dGTP_triPase"/>
    <property type="match status" value="1"/>
</dbReference>
<dbReference type="NCBIfam" id="NF002327">
    <property type="entry name" value="PRK01286.1-2"/>
    <property type="match status" value="1"/>
</dbReference>
<dbReference type="NCBIfam" id="NF002329">
    <property type="entry name" value="PRK01286.1-4"/>
    <property type="match status" value="1"/>
</dbReference>
<dbReference type="PANTHER" id="PTHR35795:SF1">
    <property type="entry name" value="BIS(5'-NUCLEOSYL)-TETRAPHOSPHATASE, SYMMETRICAL"/>
    <property type="match status" value="1"/>
</dbReference>
<dbReference type="PANTHER" id="PTHR35795">
    <property type="entry name" value="SLR1885 PROTEIN"/>
    <property type="match status" value="1"/>
</dbReference>
<dbReference type="Pfam" id="PF01966">
    <property type="entry name" value="HD"/>
    <property type="match status" value="1"/>
</dbReference>
<dbReference type="Pfam" id="PF13286">
    <property type="entry name" value="HD_assoc"/>
    <property type="match status" value="1"/>
</dbReference>
<dbReference type="SMART" id="SM00471">
    <property type="entry name" value="HDc"/>
    <property type="match status" value="1"/>
</dbReference>
<dbReference type="SUPFAM" id="SSF109604">
    <property type="entry name" value="HD-domain/PDEase-like"/>
    <property type="match status" value="1"/>
</dbReference>
<dbReference type="PROSITE" id="PS51831">
    <property type="entry name" value="HD"/>
    <property type="match status" value="1"/>
</dbReference>
<feature type="chain" id="PRO_0000205300" description="Deoxyguanosinetriphosphate triphosphohydrolase-like protein">
    <location>
        <begin position="1"/>
        <end position="349"/>
    </location>
</feature>
<feature type="domain" description="HD" evidence="2">
    <location>
        <begin position="80"/>
        <end position="197"/>
    </location>
</feature>
<proteinExistence type="inferred from homology"/>
<evidence type="ECO:0000255" key="1">
    <source>
        <dbReference type="HAMAP-Rule" id="MF_01212"/>
    </source>
</evidence>
<evidence type="ECO:0000255" key="2">
    <source>
        <dbReference type="PROSITE-ProRule" id="PRU01175"/>
    </source>
</evidence>
<comment type="similarity">
    <text evidence="1">Belongs to the dGTPase family. Type 2 subfamily.</text>
</comment>
<keyword id="KW-0378">Hydrolase</keyword>
<keyword id="KW-1185">Reference proteome</keyword>
<gene>
    <name type="ordered locus">CTC_02012</name>
</gene>
<protein>
    <recommendedName>
        <fullName evidence="1">Deoxyguanosinetriphosphate triphosphohydrolase-like protein</fullName>
    </recommendedName>
</protein>
<reference key="1">
    <citation type="journal article" date="2003" name="Proc. Natl. Acad. Sci. U.S.A.">
        <title>The genome sequence of Clostridium tetani, the causative agent of tetanus disease.</title>
        <authorList>
            <person name="Brueggemann H."/>
            <person name="Baeumer S."/>
            <person name="Fricke W.F."/>
            <person name="Wiezer A."/>
            <person name="Liesegang H."/>
            <person name="Decker I."/>
            <person name="Herzberg C."/>
            <person name="Martinez-Arias R."/>
            <person name="Merkl R."/>
            <person name="Henne A."/>
            <person name="Gottschalk G."/>
        </authorList>
    </citation>
    <scope>NUCLEOTIDE SEQUENCE [LARGE SCALE GENOMIC DNA]</scope>
    <source>
        <strain>Massachusetts / E88</strain>
    </source>
</reference>
<organism>
    <name type="scientific">Clostridium tetani (strain Massachusetts / E88)</name>
    <dbReference type="NCBI Taxonomy" id="212717"/>
    <lineage>
        <taxon>Bacteria</taxon>
        <taxon>Bacillati</taxon>
        <taxon>Bacillota</taxon>
        <taxon>Clostridia</taxon>
        <taxon>Eubacteriales</taxon>
        <taxon>Clostridiaceae</taxon>
        <taxon>Clostridium</taxon>
    </lineage>
</organism>
<name>DGTL1_CLOTE</name>
<sequence length="349" mass="40167">MSIDKMSLRKRVENIERISIIPEGTKSEDTKGRIIKENQDDIRTVFMVDRDRIIHSKSFRRLKHKTQVYIKTWGDHYRTRLTHTLEVAQIGKTIGKSIGLNEDLIEAIALGHDIGHVAFAHSGEEVLNELLPNGFKHNINSIRVLTKIEKQGKGLNLTKEVLDGILHHSGFSNKKDITKAFTLEGQVVKYSDKIAYVNHDIDDSIRAGLLHESDLPKDLINVLGRNHSDRIDTLVKDCINKTLENIKLGTIEVGMSEKIEIALKELRKFMFQRVYKGSILKEERDKAKFVLYQVFNYYLKNSNKMPEFYKNIVEQEGLYQGVADYISGMSDDYCLLLFNNIYVPKIVIY</sequence>